<evidence type="ECO:0000255" key="1">
    <source>
        <dbReference type="HAMAP-Rule" id="MF_00046"/>
    </source>
</evidence>
<protein>
    <recommendedName>
        <fullName evidence="1">UDP-N-acetylmuramate--L-alanine ligase</fullName>
        <ecNumber evidence="1">6.3.2.8</ecNumber>
    </recommendedName>
    <alternativeName>
        <fullName evidence="1">UDP-N-acetylmuramoyl-L-alanine synthetase</fullName>
    </alternativeName>
</protein>
<reference key="1">
    <citation type="submission" date="2005-08" db="EMBL/GenBank/DDBJ databases">
        <title>Complete sequence of Pelodictyon luteolum DSM 273.</title>
        <authorList>
            <consortium name="US DOE Joint Genome Institute"/>
            <person name="Copeland A."/>
            <person name="Lucas S."/>
            <person name="Lapidus A."/>
            <person name="Barry K."/>
            <person name="Detter J.C."/>
            <person name="Glavina T."/>
            <person name="Hammon N."/>
            <person name="Israni S."/>
            <person name="Pitluck S."/>
            <person name="Bryant D."/>
            <person name="Schmutz J."/>
            <person name="Larimer F."/>
            <person name="Land M."/>
            <person name="Kyrpides N."/>
            <person name="Ivanova N."/>
            <person name="Richardson P."/>
        </authorList>
    </citation>
    <scope>NUCLEOTIDE SEQUENCE [LARGE SCALE GENOMIC DNA]</scope>
    <source>
        <strain>DSM 273 / BCRC 81028 / 2530</strain>
    </source>
</reference>
<keyword id="KW-0067">ATP-binding</keyword>
<keyword id="KW-0131">Cell cycle</keyword>
<keyword id="KW-0132">Cell division</keyword>
<keyword id="KW-0133">Cell shape</keyword>
<keyword id="KW-0961">Cell wall biogenesis/degradation</keyword>
<keyword id="KW-0963">Cytoplasm</keyword>
<keyword id="KW-0436">Ligase</keyword>
<keyword id="KW-0547">Nucleotide-binding</keyword>
<keyword id="KW-0573">Peptidoglycan synthesis</keyword>
<keyword id="KW-1185">Reference proteome</keyword>
<feature type="chain" id="PRO_0000242573" description="UDP-N-acetylmuramate--L-alanine ligase">
    <location>
        <begin position="1"/>
        <end position="473"/>
    </location>
</feature>
<feature type="binding site" evidence="1">
    <location>
        <begin position="114"/>
        <end position="120"/>
    </location>
    <ligand>
        <name>ATP</name>
        <dbReference type="ChEBI" id="CHEBI:30616"/>
    </ligand>
</feature>
<name>MURC_CHLL3</name>
<dbReference type="EC" id="6.3.2.8" evidence="1"/>
<dbReference type="EMBL" id="CP000096">
    <property type="protein sequence ID" value="ABB24951.1"/>
    <property type="molecule type" value="Genomic_DNA"/>
</dbReference>
<dbReference type="RefSeq" id="WP_011358821.1">
    <property type="nucleotide sequence ID" value="NC_007512.1"/>
</dbReference>
<dbReference type="SMR" id="Q3B130"/>
<dbReference type="STRING" id="319225.Plut_2109"/>
<dbReference type="KEGG" id="plt:Plut_2109"/>
<dbReference type="eggNOG" id="COG0773">
    <property type="taxonomic scope" value="Bacteria"/>
</dbReference>
<dbReference type="HOGENOM" id="CLU_028104_2_2_10"/>
<dbReference type="OrthoDB" id="9804126at2"/>
<dbReference type="UniPathway" id="UPA00219"/>
<dbReference type="Proteomes" id="UP000002709">
    <property type="component" value="Chromosome"/>
</dbReference>
<dbReference type="GO" id="GO:0005737">
    <property type="term" value="C:cytoplasm"/>
    <property type="evidence" value="ECO:0007669"/>
    <property type="project" value="UniProtKB-SubCell"/>
</dbReference>
<dbReference type="GO" id="GO:0005524">
    <property type="term" value="F:ATP binding"/>
    <property type="evidence" value="ECO:0007669"/>
    <property type="project" value="UniProtKB-UniRule"/>
</dbReference>
<dbReference type="GO" id="GO:0008763">
    <property type="term" value="F:UDP-N-acetylmuramate-L-alanine ligase activity"/>
    <property type="evidence" value="ECO:0007669"/>
    <property type="project" value="UniProtKB-UniRule"/>
</dbReference>
<dbReference type="GO" id="GO:0051301">
    <property type="term" value="P:cell division"/>
    <property type="evidence" value="ECO:0007669"/>
    <property type="project" value="UniProtKB-KW"/>
</dbReference>
<dbReference type="GO" id="GO:0071555">
    <property type="term" value="P:cell wall organization"/>
    <property type="evidence" value="ECO:0007669"/>
    <property type="project" value="UniProtKB-KW"/>
</dbReference>
<dbReference type="GO" id="GO:0009252">
    <property type="term" value="P:peptidoglycan biosynthetic process"/>
    <property type="evidence" value="ECO:0007669"/>
    <property type="project" value="UniProtKB-UniRule"/>
</dbReference>
<dbReference type="GO" id="GO:0008360">
    <property type="term" value="P:regulation of cell shape"/>
    <property type="evidence" value="ECO:0007669"/>
    <property type="project" value="UniProtKB-KW"/>
</dbReference>
<dbReference type="Gene3D" id="3.90.190.20">
    <property type="entry name" value="Mur ligase, C-terminal domain"/>
    <property type="match status" value="1"/>
</dbReference>
<dbReference type="Gene3D" id="3.40.1190.10">
    <property type="entry name" value="Mur-like, catalytic domain"/>
    <property type="match status" value="1"/>
</dbReference>
<dbReference type="Gene3D" id="3.40.50.720">
    <property type="entry name" value="NAD(P)-binding Rossmann-like Domain"/>
    <property type="match status" value="1"/>
</dbReference>
<dbReference type="HAMAP" id="MF_00046">
    <property type="entry name" value="MurC"/>
    <property type="match status" value="1"/>
</dbReference>
<dbReference type="InterPro" id="IPR036565">
    <property type="entry name" value="Mur-like_cat_sf"/>
</dbReference>
<dbReference type="InterPro" id="IPR004101">
    <property type="entry name" value="Mur_ligase_C"/>
</dbReference>
<dbReference type="InterPro" id="IPR036615">
    <property type="entry name" value="Mur_ligase_C_dom_sf"/>
</dbReference>
<dbReference type="InterPro" id="IPR013221">
    <property type="entry name" value="Mur_ligase_cen"/>
</dbReference>
<dbReference type="InterPro" id="IPR000713">
    <property type="entry name" value="Mur_ligase_N"/>
</dbReference>
<dbReference type="InterPro" id="IPR050061">
    <property type="entry name" value="MurCDEF_pg_biosynth"/>
</dbReference>
<dbReference type="InterPro" id="IPR005758">
    <property type="entry name" value="UDP-N-AcMur_Ala_ligase_MurC"/>
</dbReference>
<dbReference type="NCBIfam" id="TIGR01082">
    <property type="entry name" value="murC"/>
    <property type="match status" value="1"/>
</dbReference>
<dbReference type="PANTHER" id="PTHR43445:SF3">
    <property type="entry name" value="UDP-N-ACETYLMURAMATE--L-ALANINE LIGASE"/>
    <property type="match status" value="1"/>
</dbReference>
<dbReference type="PANTHER" id="PTHR43445">
    <property type="entry name" value="UDP-N-ACETYLMURAMATE--L-ALANINE LIGASE-RELATED"/>
    <property type="match status" value="1"/>
</dbReference>
<dbReference type="Pfam" id="PF01225">
    <property type="entry name" value="Mur_ligase"/>
    <property type="match status" value="1"/>
</dbReference>
<dbReference type="Pfam" id="PF02875">
    <property type="entry name" value="Mur_ligase_C"/>
    <property type="match status" value="1"/>
</dbReference>
<dbReference type="Pfam" id="PF08245">
    <property type="entry name" value="Mur_ligase_M"/>
    <property type="match status" value="1"/>
</dbReference>
<dbReference type="SUPFAM" id="SSF51984">
    <property type="entry name" value="MurCD N-terminal domain"/>
    <property type="match status" value="1"/>
</dbReference>
<dbReference type="SUPFAM" id="SSF53623">
    <property type="entry name" value="MurD-like peptide ligases, catalytic domain"/>
    <property type="match status" value="1"/>
</dbReference>
<dbReference type="SUPFAM" id="SSF53244">
    <property type="entry name" value="MurD-like peptide ligases, peptide-binding domain"/>
    <property type="match status" value="1"/>
</dbReference>
<gene>
    <name evidence="1" type="primary">murC</name>
    <name type="ordered locus">Plut_2109</name>
</gene>
<proteinExistence type="inferred from homology"/>
<comment type="function">
    <text evidence="1">Cell wall formation.</text>
</comment>
<comment type="catalytic activity">
    <reaction evidence="1">
        <text>UDP-N-acetyl-alpha-D-muramate + L-alanine + ATP = UDP-N-acetyl-alpha-D-muramoyl-L-alanine + ADP + phosphate + H(+)</text>
        <dbReference type="Rhea" id="RHEA:23372"/>
        <dbReference type="ChEBI" id="CHEBI:15378"/>
        <dbReference type="ChEBI" id="CHEBI:30616"/>
        <dbReference type="ChEBI" id="CHEBI:43474"/>
        <dbReference type="ChEBI" id="CHEBI:57972"/>
        <dbReference type="ChEBI" id="CHEBI:70757"/>
        <dbReference type="ChEBI" id="CHEBI:83898"/>
        <dbReference type="ChEBI" id="CHEBI:456216"/>
        <dbReference type="EC" id="6.3.2.8"/>
    </reaction>
</comment>
<comment type="pathway">
    <text evidence="1">Cell wall biogenesis; peptidoglycan biosynthesis.</text>
</comment>
<comment type="subcellular location">
    <subcellularLocation>
        <location evidence="1">Cytoplasm</location>
    </subcellularLocation>
</comment>
<comment type="similarity">
    <text evidence="1">Belongs to the MurCDEF family.</text>
</comment>
<sequence length="473" mass="50764">MELGKTKRVHIVGIGGAGMSAIAELLLKSGFAVSGSDLSTGEVTDKLQQHGAVIYRGHEAGQVADCDVVVYSSAVRPDANVEISEALKSGIPVVKRDEMLGELMRYKSGICVAGTHGKTTTTAMIATMLIESGESPTVMIGGVSDYLKGSTVVGEGRYMVIEADEFDRAFLRLTPTIAVLNSLESEHMDTYGTLDELKRSFIEFANKVPFYGRVICSVDWPEIRRIIGSLNRRLTTVGIEEPADVTAGDIVMDHGRATFTITAFGTDYPGVCLNVPGRHNILNALSAFATGLELGIEPERLIAGLGRYSGMRRRFQVKFRDSRGLMVIDDYAHHPSEVKATVKAARSGWPDARVIAVFQPHLFSRTLEFADEYGWALSRADGVYVAAVYPSREKQEDFPGVDGALVAEAVRRAGGRQVAFVPDRDELLAAVLNEGAEPAPGGTILLFMGAGDITVLATEVAGRVSGGEGHARA</sequence>
<accession>Q3B130</accession>
<organism>
    <name type="scientific">Chlorobium luteolum (strain DSM 273 / BCRC 81028 / 2530)</name>
    <name type="common">Pelodictyon luteolum</name>
    <dbReference type="NCBI Taxonomy" id="319225"/>
    <lineage>
        <taxon>Bacteria</taxon>
        <taxon>Pseudomonadati</taxon>
        <taxon>Chlorobiota</taxon>
        <taxon>Chlorobiia</taxon>
        <taxon>Chlorobiales</taxon>
        <taxon>Chlorobiaceae</taxon>
        <taxon>Chlorobium/Pelodictyon group</taxon>
        <taxon>Pelodictyon</taxon>
    </lineage>
</organism>